<keyword id="KW-0068">Autocatalytic cleavage</keyword>
<keyword id="KW-0963">Cytoplasm</keyword>
<keyword id="KW-0378">Hydrolase</keyword>
<keyword id="KW-0645">Protease</keyword>
<keyword id="KW-0647">Proteasome</keyword>
<keyword id="KW-1185">Reference proteome</keyword>
<keyword id="KW-0888">Threonine protease</keyword>
<keyword id="KW-0865">Zymogen</keyword>
<reference key="1">
    <citation type="journal article" date="2009" name="Stand. Genomic Sci.">
        <title>Complete genome sequence of Beutenbergia cavernae type strain (HKI 0122).</title>
        <authorList>
            <person name="Land M."/>
            <person name="Pukall R."/>
            <person name="Abt B."/>
            <person name="Goker M."/>
            <person name="Rohde M."/>
            <person name="Glavina Del Rio T."/>
            <person name="Tice H."/>
            <person name="Copeland A."/>
            <person name="Cheng J.F."/>
            <person name="Lucas S."/>
            <person name="Chen F."/>
            <person name="Nolan M."/>
            <person name="Bruce D."/>
            <person name="Goodwin L."/>
            <person name="Pitluck S."/>
            <person name="Ivanova N."/>
            <person name="Mavromatis K."/>
            <person name="Ovchinnikova G."/>
            <person name="Pati A."/>
            <person name="Chen A."/>
            <person name="Palaniappan K."/>
            <person name="Hauser L."/>
            <person name="Chang Y.J."/>
            <person name="Jefferies C.C."/>
            <person name="Saunders E."/>
            <person name="Brettin T."/>
            <person name="Detter J.C."/>
            <person name="Han C."/>
            <person name="Chain P."/>
            <person name="Bristow J."/>
            <person name="Eisen J.A."/>
            <person name="Markowitz V."/>
            <person name="Hugenholtz P."/>
            <person name="Kyrpides N.C."/>
            <person name="Klenk H.P."/>
            <person name="Lapidus A."/>
        </authorList>
    </citation>
    <scope>NUCLEOTIDE SEQUENCE [LARGE SCALE GENOMIC DNA]</scope>
    <source>
        <strain>ATCC BAA-8 / DSM 12333 / CCUG 43141 / JCM 11478 / NBRC 16432 / NCIMB 13614 / HKI 0122</strain>
    </source>
</reference>
<organism>
    <name type="scientific">Beutenbergia cavernae (strain ATCC BAA-8 / DSM 12333 / CCUG 43141 / JCM 11478 / NBRC 16432 / NCIMB 13614 / HKI 0122)</name>
    <dbReference type="NCBI Taxonomy" id="471853"/>
    <lineage>
        <taxon>Bacteria</taxon>
        <taxon>Bacillati</taxon>
        <taxon>Actinomycetota</taxon>
        <taxon>Actinomycetes</taxon>
        <taxon>Micrococcales</taxon>
        <taxon>Beutenbergiaceae</taxon>
        <taxon>Beutenbergia</taxon>
    </lineage>
</organism>
<proteinExistence type="inferred from homology"/>
<gene>
    <name evidence="1" type="primary">prcB</name>
    <name type="ordered locus">Bcav_2238</name>
</gene>
<evidence type="ECO:0000255" key="1">
    <source>
        <dbReference type="HAMAP-Rule" id="MF_02113"/>
    </source>
</evidence>
<comment type="function">
    <text evidence="1">Component of the proteasome core, a large protease complex with broad specificity involved in protein degradation.</text>
</comment>
<comment type="catalytic activity">
    <reaction evidence="1">
        <text>Cleavage of peptide bonds with very broad specificity.</text>
        <dbReference type="EC" id="3.4.25.1"/>
    </reaction>
</comment>
<comment type="activity regulation">
    <text evidence="1">The formation of the proteasomal ATPase ARC-20S proteasome complex, likely via the docking of the C-termini of ARC into the intersubunit pockets in the alpha-rings, may trigger opening of the gate for substrate entry. Interconversion between the open-gate and close-gate conformations leads to a dynamic regulation of the 20S proteasome proteolysis activity.</text>
</comment>
<comment type="pathway">
    <text evidence="1">Protein degradation; proteasomal Pup-dependent pathway.</text>
</comment>
<comment type="subunit">
    <text evidence="1">The 20S proteasome core is composed of 14 alpha and 14 beta subunits that assemble into four stacked heptameric rings, resulting in a barrel-shaped structure. The two inner rings, each composed of seven catalytic beta subunits, are sandwiched by two outer rings, each composed of seven alpha subunits. The catalytic chamber with the active sites is on the inside of the barrel. Has a gated structure, the ends of the cylinder being occluded by the N-termini of the alpha-subunits. Is capped by the proteasome-associated ATPase, ARC.</text>
</comment>
<comment type="subcellular location">
    <subcellularLocation>
        <location evidence="1">Cytoplasm</location>
    </subcellularLocation>
</comment>
<comment type="similarity">
    <text evidence="1">Belongs to the peptidase T1B family.</text>
</comment>
<name>PSB_BEUC1</name>
<protein>
    <recommendedName>
        <fullName evidence="1">Proteasome subunit beta</fullName>
        <ecNumber evidence="1">3.4.25.1</ecNumber>
    </recommendedName>
    <alternativeName>
        <fullName evidence="1">20S proteasome beta subunit</fullName>
    </alternativeName>
    <alternativeName>
        <fullName evidence="1">Proteasome core protein PrcB</fullName>
    </alternativeName>
</protein>
<sequence length="272" mass="28596">MSTGGDRLPEAFLRPGSSSFVEFLREVAPQSHPEHARPAGAGDVVHATTIVALSFAGGIVMAGDRRATMGSFIAHREIEKVFPGDEYSAIGIAGTAGIGVELVRLFQLELEHFEKIEGAMLSLEGKANRLTTLLRGNLGLALQGLAAVPLFGGYDLDRAAGRIFSYDVTGGRYEERNHHSIGSGGMFARGSLKKLWRPGLGDRDAIAVALAALVDAADDDSATGGPDALRGIFPVVATVTAEGYRRIAEGELAGLVAEIDAARAQAREGDTR</sequence>
<accession>C5BVA2</accession>
<dbReference type="EC" id="3.4.25.1" evidence="1"/>
<dbReference type="EMBL" id="CP001618">
    <property type="protein sequence ID" value="ACQ80489.1"/>
    <property type="molecule type" value="Genomic_DNA"/>
</dbReference>
<dbReference type="RefSeq" id="WP_015882729.1">
    <property type="nucleotide sequence ID" value="NC_012669.1"/>
</dbReference>
<dbReference type="SMR" id="C5BVA2"/>
<dbReference type="STRING" id="471853.Bcav_2238"/>
<dbReference type="KEGG" id="bcv:Bcav_2238"/>
<dbReference type="eggNOG" id="COG0638">
    <property type="taxonomic scope" value="Bacteria"/>
</dbReference>
<dbReference type="HOGENOM" id="CLU_035750_2_0_11"/>
<dbReference type="OrthoDB" id="5174038at2"/>
<dbReference type="UniPathway" id="UPA00997"/>
<dbReference type="Proteomes" id="UP000007962">
    <property type="component" value="Chromosome"/>
</dbReference>
<dbReference type="GO" id="GO:0005737">
    <property type="term" value="C:cytoplasm"/>
    <property type="evidence" value="ECO:0007669"/>
    <property type="project" value="UniProtKB-SubCell"/>
</dbReference>
<dbReference type="GO" id="GO:0019774">
    <property type="term" value="C:proteasome core complex, beta-subunit complex"/>
    <property type="evidence" value="ECO:0007669"/>
    <property type="project" value="UniProtKB-UniRule"/>
</dbReference>
<dbReference type="GO" id="GO:0004298">
    <property type="term" value="F:threonine-type endopeptidase activity"/>
    <property type="evidence" value="ECO:0007669"/>
    <property type="project" value="UniProtKB-UniRule"/>
</dbReference>
<dbReference type="GO" id="GO:0019941">
    <property type="term" value="P:modification-dependent protein catabolic process"/>
    <property type="evidence" value="ECO:0007669"/>
    <property type="project" value="UniProtKB-UniRule"/>
</dbReference>
<dbReference type="GO" id="GO:0010498">
    <property type="term" value="P:proteasomal protein catabolic process"/>
    <property type="evidence" value="ECO:0007669"/>
    <property type="project" value="UniProtKB-UniRule"/>
</dbReference>
<dbReference type="CDD" id="cd01906">
    <property type="entry name" value="proteasome_protease_HslV"/>
    <property type="match status" value="1"/>
</dbReference>
<dbReference type="Gene3D" id="3.60.20.10">
    <property type="entry name" value="Glutamine Phosphoribosylpyrophosphate, subunit 1, domain 1"/>
    <property type="match status" value="1"/>
</dbReference>
<dbReference type="HAMAP" id="MF_02113_B">
    <property type="entry name" value="Proteasome_B_B"/>
    <property type="match status" value="1"/>
</dbReference>
<dbReference type="InterPro" id="IPR029055">
    <property type="entry name" value="Ntn_hydrolases_N"/>
</dbReference>
<dbReference type="InterPro" id="IPR000243">
    <property type="entry name" value="Pept_T1A_subB"/>
</dbReference>
<dbReference type="InterPro" id="IPR001353">
    <property type="entry name" value="Proteasome_sua/b"/>
</dbReference>
<dbReference type="InterPro" id="IPR023333">
    <property type="entry name" value="Proteasome_suB-type"/>
</dbReference>
<dbReference type="InterPro" id="IPR022483">
    <property type="entry name" value="PSB_actinobac"/>
</dbReference>
<dbReference type="NCBIfam" id="TIGR03690">
    <property type="entry name" value="20S_bact_beta"/>
    <property type="match status" value="1"/>
</dbReference>
<dbReference type="PANTHER" id="PTHR32194:SF0">
    <property type="entry name" value="ATP-DEPENDENT PROTEASE SUBUNIT HSLV"/>
    <property type="match status" value="1"/>
</dbReference>
<dbReference type="PANTHER" id="PTHR32194">
    <property type="entry name" value="METALLOPROTEASE TLDD"/>
    <property type="match status" value="1"/>
</dbReference>
<dbReference type="Pfam" id="PF00227">
    <property type="entry name" value="Proteasome"/>
    <property type="match status" value="1"/>
</dbReference>
<dbReference type="PRINTS" id="PR00141">
    <property type="entry name" value="PROTEASOME"/>
</dbReference>
<dbReference type="SUPFAM" id="SSF56235">
    <property type="entry name" value="N-terminal nucleophile aminohydrolases (Ntn hydrolases)"/>
    <property type="match status" value="1"/>
</dbReference>
<dbReference type="PROSITE" id="PS51476">
    <property type="entry name" value="PROTEASOME_BETA_2"/>
    <property type="match status" value="1"/>
</dbReference>
<feature type="propeptide" id="PRO_0000397500" description="Removed in mature form; by autocatalysis" evidence="1">
    <location>
        <begin position="1"/>
        <end position="47"/>
    </location>
</feature>
<feature type="chain" id="PRO_0000397501" description="Proteasome subunit beta">
    <location>
        <begin position="48"/>
        <end position="272"/>
    </location>
</feature>
<feature type="active site" description="Nucleophile" evidence="1">
    <location>
        <position position="48"/>
    </location>
</feature>